<dbReference type="EC" id="3.5.1.77"/>
<dbReference type="EMBL" id="U59376">
    <property type="protein sequence ID" value="AAB47607.1"/>
    <property type="molecule type" value="Genomic_DNA"/>
</dbReference>
<dbReference type="EMBL" id="X91070">
    <property type="protein sequence ID" value="CAA62550.1"/>
    <property type="molecule type" value="Genomic_DNA"/>
</dbReference>
<dbReference type="PDB" id="1FO6">
    <property type="method" value="X-ray"/>
    <property type="resolution" value="1.95 A"/>
    <property type="chains" value="A/B/C/D=1-304"/>
</dbReference>
<dbReference type="PDB" id="2GGK">
    <property type="method" value="X-ray"/>
    <property type="resolution" value="2.30 A"/>
    <property type="chains" value="A/B/C/D=1-304"/>
</dbReference>
<dbReference type="PDB" id="2GGL">
    <property type="method" value="X-ray"/>
    <property type="resolution" value="2.40 A"/>
    <property type="chains" value="A/B/C/D=1-304"/>
</dbReference>
<dbReference type="PDBsum" id="1FO6"/>
<dbReference type="PDBsum" id="2GGK"/>
<dbReference type="PDBsum" id="2GGL"/>
<dbReference type="SMR" id="Q44185"/>
<dbReference type="EvolutionaryTrace" id="Q44185"/>
<dbReference type="GO" id="GO:0047417">
    <property type="term" value="F:N-carbamoyl-D-amino acid hydrolase activity"/>
    <property type="evidence" value="ECO:0007669"/>
    <property type="project" value="UniProtKB-EC"/>
</dbReference>
<dbReference type="CDD" id="cd07569">
    <property type="entry name" value="DCase"/>
    <property type="match status" value="1"/>
</dbReference>
<dbReference type="Gene3D" id="3.60.110.10">
    <property type="entry name" value="Carbon-nitrogen hydrolase"/>
    <property type="match status" value="1"/>
</dbReference>
<dbReference type="InterPro" id="IPR050345">
    <property type="entry name" value="Aliph_Amidase/BUP"/>
</dbReference>
<dbReference type="InterPro" id="IPR003010">
    <property type="entry name" value="C-N_Hydrolase"/>
</dbReference>
<dbReference type="InterPro" id="IPR036526">
    <property type="entry name" value="C-N_Hydrolase_sf"/>
</dbReference>
<dbReference type="PANTHER" id="PTHR43674">
    <property type="entry name" value="NITRILASE C965.09-RELATED"/>
    <property type="match status" value="1"/>
</dbReference>
<dbReference type="PANTHER" id="PTHR43674:SF12">
    <property type="entry name" value="NITRILASE C965.09-RELATED"/>
    <property type="match status" value="1"/>
</dbReference>
<dbReference type="Pfam" id="PF00795">
    <property type="entry name" value="CN_hydrolase"/>
    <property type="match status" value="1"/>
</dbReference>
<dbReference type="SUPFAM" id="SSF56317">
    <property type="entry name" value="Carbon-nitrogen hydrolase"/>
    <property type="match status" value="1"/>
</dbReference>
<dbReference type="PROSITE" id="PS50263">
    <property type="entry name" value="CN_HYDROLASE"/>
    <property type="match status" value="1"/>
</dbReference>
<proteinExistence type="evidence at protein level"/>
<feature type="chain" id="PRO_0000079801" description="N-carbamoyl-D-amino acid hydrolase">
    <location>
        <begin position="1"/>
        <end position="304"/>
    </location>
</feature>
<feature type="domain" description="CN hydrolase" evidence="1">
    <location>
        <begin position="5"/>
        <end position="276"/>
    </location>
</feature>
<feature type="active site" evidence="4">
    <location>
        <position position="47"/>
    </location>
</feature>
<feature type="active site" evidence="4">
    <location>
        <position position="127"/>
    </location>
</feature>
<feature type="active site" evidence="4">
    <location>
        <position position="172"/>
    </location>
</feature>
<feature type="mutagenesis site" description="No activity." evidence="2">
    <original>H</original>
    <variation>A</variation>
    <variation>N</variation>
    <variation>R</variation>
    <location>
        <position position="129"/>
    </location>
</feature>
<feature type="mutagenesis site" description="5% activity of wild-type." evidence="2">
    <original>H</original>
    <variation>A</variation>
    <location>
        <position position="144"/>
    </location>
</feature>
<feature type="mutagenesis site" description="17% activity of wild-type." evidence="2">
    <original>H</original>
    <variation>A</variation>
    <location>
        <position position="215"/>
    </location>
</feature>
<feature type="sequence conflict" description="In Ref. 2; AAB47607." evidence="3" ref="2">
    <original>V</original>
    <variation>L</variation>
    <location>
        <position position="274"/>
    </location>
</feature>
<feature type="strand" evidence="5">
    <location>
        <begin position="4"/>
        <end position="12"/>
    </location>
</feature>
<feature type="helix" evidence="5">
    <location>
        <begin position="21"/>
        <end position="37"/>
    </location>
</feature>
<feature type="strand" evidence="5">
    <location>
        <begin position="41"/>
        <end position="44"/>
    </location>
</feature>
<feature type="turn" evidence="5">
    <location>
        <begin position="47"/>
        <end position="50"/>
    </location>
</feature>
<feature type="helix" evidence="5">
    <location>
        <begin position="54"/>
        <end position="56"/>
    </location>
</feature>
<feature type="helix" evidence="5">
    <location>
        <begin position="62"/>
        <end position="67"/>
    </location>
</feature>
<feature type="strand" evidence="5">
    <location>
        <begin position="69"/>
        <end position="74"/>
    </location>
</feature>
<feature type="turn" evidence="5">
    <location>
        <begin position="76"/>
        <end position="78"/>
    </location>
</feature>
<feature type="helix" evidence="5">
    <location>
        <begin position="79"/>
        <end position="88"/>
    </location>
</feature>
<feature type="strand" evidence="5">
    <location>
        <begin position="91"/>
        <end position="102"/>
    </location>
</feature>
<feature type="strand" evidence="5">
    <location>
        <begin position="105"/>
        <end position="115"/>
    </location>
</feature>
<feature type="strand" evidence="5">
    <location>
        <begin position="121"/>
        <end position="126"/>
    </location>
</feature>
<feature type="strand" evidence="5">
    <location>
        <begin position="140"/>
        <end position="142"/>
    </location>
</feature>
<feature type="helix" evidence="5">
    <location>
        <begin position="146"/>
        <end position="149"/>
    </location>
</feature>
<feature type="strand" evidence="5">
    <location>
        <begin position="159"/>
        <end position="162"/>
    </location>
</feature>
<feature type="strand" evidence="5">
    <location>
        <begin position="165"/>
        <end position="169"/>
    </location>
</feature>
<feature type="helix" evidence="5">
    <location>
        <begin position="172"/>
        <end position="176"/>
    </location>
</feature>
<feature type="helix" evidence="5">
    <location>
        <begin position="178"/>
        <end position="186"/>
    </location>
</feature>
<feature type="strand" evidence="5">
    <location>
        <begin position="190"/>
        <end position="196"/>
    </location>
</feature>
<feature type="helix" evidence="5">
    <location>
        <begin position="206"/>
        <end position="211"/>
    </location>
</feature>
<feature type="helix" evidence="5">
    <location>
        <begin position="212"/>
        <end position="226"/>
    </location>
</feature>
<feature type="strand" evidence="5">
    <location>
        <begin position="230"/>
        <end position="236"/>
    </location>
</feature>
<feature type="strand" evidence="5">
    <location>
        <begin position="238"/>
        <end position="240"/>
    </location>
</feature>
<feature type="strand" evidence="5">
    <location>
        <begin position="243"/>
        <end position="245"/>
    </location>
</feature>
<feature type="strand" evidence="5">
    <location>
        <begin position="250"/>
        <end position="252"/>
    </location>
</feature>
<feature type="strand" evidence="5">
    <location>
        <begin position="258"/>
        <end position="261"/>
    </location>
</feature>
<feature type="strand" evidence="5">
    <location>
        <begin position="264"/>
        <end position="275"/>
    </location>
</feature>
<feature type="helix" evidence="5">
    <location>
        <begin position="276"/>
        <end position="279"/>
    </location>
</feature>
<feature type="helix" evidence="5">
    <location>
        <begin position="280"/>
        <end position="283"/>
    </location>
</feature>
<feature type="turn" evidence="5">
    <location>
        <begin position="284"/>
        <end position="287"/>
    </location>
</feature>
<feature type="helix" evidence="5">
    <location>
        <begin position="289"/>
        <end position="292"/>
    </location>
</feature>
<feature type="helix" evidence="5">
    <location>
        <begin position="295"/>
        <end position="297"/>
    </location>
</feature>
<feature type="helix" evidence="5">
    <location>
        <begin position="299"/>
        <end position="302"/>
    </location>
</feature>
<accession>Q44185</accession>
<accession>Q44203</accession>
<evidence type="ECO:0000255" key="1">
    <source>
        <dbReference type="PROSITE-ProRule" id="PRU00054"/>
    </source>
</evidence>
<evidence type="ECO:0000269" key="2">
    <source>
    </source>
</evidence>
<evidence type="ECO:0000305" key="3"/>
<evidence type="ECO:0000305" key="4">
    <source>
    </source>
</evidence>
<evidence type="ECO:0007829" key="5">
    <source>
        <dbReference type="PDB" id="1FO6"/>
    </source>
</evidence>
<keyword id="KW-0002">3D-structure</keyword>
<keyword id="KW-0378">Hydrolase</keyword>
<comment type="function">
    <text>The enzyme catalyzes the hydrolysis of N-carbamoyl-D-amino acids to the corresponding which are useful intermediates in the preparation of beta-lactam antibiotics. Industrial production of beta-lactam antibiotics is now being developed using this enzyme.</text>
</comment>
<comment type="catalytic activity">
    <reaction>
        <text>an N-carbamoyl-D-amino acid + H2O + 2 H(+) = a D-alpha-amino acid + NH4(+) + CO2</text>
        <dbReference type="Rhea" id="RHEA:11000"/>
        <dbReference type="ChEBI" id="CHEBI:15377"/>
        <dbReference type="ChEBI" id="CHEBI:15378"/>
        <dbReference type="ChEBI" id="CHEBI:16526"/>
        <dbReference type="ChEBI" id="CHEBI:28938"/>
        <dbReference type="ChEBI" id="CHEBI:59871"/>
        <dbReference type="ChEBI" id="CHEBI:85602"/>
        <dbReference type="EC" id="3.5.1.77"/>
    </reaction>
</comment>
<comment type="subunit">
    <text>Homotetramer.</text>
</comment>
<reference key="1">
    <citation type="journal article" date="1996" name="FEMS Microbiol. Lett.">
        <title>Identification, sequencing and mutagenesis of the gene for a D-carbamoylase from Agrobacterium radiobacter.</title>
        <authorList>
            <person name="Buson A."/>
            <person name="Negro A."/>
            <person name="Grassato L."/>
            <person name="Tagliaro M."/>
            <person name="Basaglia M."/>
            <person name="Grandi C."/>
            <person name="Fontana A."/>
            <person name="Nuti M.P."/>
        </authorList>
    </citation>
    <scope>NUCLEOTIDE SEQUENCE [GENOMIC DNA]</scope>
    <source>
        <strain>BCRC 13814 / CECT 4067 / NRRL B-11291</strain>
    </source>
</reference>
<reference key="2">
    <citation type="submission" date="1995-08" db="EMBL/GenBank/DDBJ databases">
        <authorList>
            <person name="Grifantini R."/>
        </authorList>
    </citation>
    <scope>NUCLEOTIDE SEQUENCE [GENOMIC DNA]</scope>
    <source>
        <strain>BCRC 13814 / CECT 4067 / NRRL B-11291</strain>
    </source>
</reference>
<reference key="3">
    <citation type="journal article" date="1996" name="J. Biol. Chem.">
        <title>Topological mapping of the cysteine residues of N-carbamyl-D-amino-acid amidohydrolase and their role in enzymatic activity.</title>
        <authorList>
            <person name="Grifantini R."/>
            <person name="Pratesi C."/>
            <person name="Galli G."/>
            <person name="Grandi G."/>
        </authorList>
    </citation>
    <scope>CHARACTERIZATION</scope>
    <source>
        <strain>BCRC 13814 / CECT 4067 / NRRL B-11291</strain>
    </source>
</reference>
<reference key="4">
    <citation type="journal article" date="2001" name="J. Mol. Biol.">
        <title>Crystal structure and site-directed mutagenesis studies of N-carbamoyl-D-amino-acid amidohydrolase from Agrobacterium radiobacter reveals a homotetramer and insight into a catalytic cleft.</title>
        <authorList>
            <person name="Wang W.-C."/>
            <person name="Hsu W.-H."/>
            <person name="Chien F.-T."/>
            <person name="Chen C.-Y."/>
        </authorList>
    </citation>
    <scope>X-RAY CRYSTALLOGRAPHY (1.95 ANGSTROMS)</scope>
    <scope>MUTAGENESIS OF HIS-129; HIS-144 AND HIS-215</scope>
</reference>
<protein>
    <recommendedName>
        <fullName>N-carbamoyl-D-amino acid hydrolase</fullName>
        <ecNumber>3.5.1.77</ecNumber>
    </recommendedName>
    <alternativeName>
        <fullName>D-N-alpha-carbamilase</fullName>
    </alternativeName>
</protein>
<sequence length="304" mass="34152">MTRQMILAVGQQGPIARAETREQVVGRLLDMLTNAASRGVNFIVFPELALTTFFPRWHFTDEAELDSFYETEMPGPVVRPLFETAAELGIGFNLGYAELVVEGGVKRRFNTSILVDKSGKIVGKYRKIHLPGHKEYEAYRPFQHLEKRYFEPGDLGFPVYDVDAAKMGMFICNDRRWPETWRVMGLKGAEIICGGYNTPTHNPPVPQHDHLTSFHHLLSMQAGSYQNGAWSAAAGKVGMEEGCMLLGHSCIVAPTGEIVALTTTLEDEVITAAVDLDRCRELREHIFNFKAHRQPQHYGLIAEF</sequence>
<name>DCAS_RHIRD</name>
<organism>
    <name type="scientific">Rhizobium radiobacter</name>
    <name type="common">Agrobacterium tumefaciens</name>
    <name type="synonym">Agrobacterium radiobacter</name>
    <dbReference type="NCBI Taxonomy" id="358"/>
    <lineage>
        <taxon>Bacteria</taxon>
        <taxon>Pseudomonadati</taxon>
        <taxon>Pseudomonadota</taxon>
        <taxon>Alphaproteobacteria</taxon>
        <taxon>Hyphomicrobiales</taxon>
        <taxon>Rhizobiaceae</taxon>
        <taxon>Rhizobium/Agrobacterium group</taxon>
        <taxon>Agrobacterium</taxon>
        <taxon>Agrobacterium tumefaciens complex</taxon>
    </lineage>
</organism>